<name>IFNT6_SHEEP</name>
<dbReference type="EMBL" id="X56343">
    <property type="protein sequence ID" value="CAA39783.1"/>
    <property type="molecule type" value="mRNA"/>
</dbReference>
<dbReference type="EMBL" id="X56346">
    <property type="protein sequence ID" value="CAA39786.1"/>
    <property type="molecule type" value="mRNA"/>
</dbReference>
<dbReference type="EMBL" id="AF158823">
    <property type="protein sequence ID" value="AAD44975.1"/>
    <property type="molecule type" value="mRNA"/>
</dbReference>
<dbReference type="EMBL" id="AF158822">
    <property type="protein sequence ID" value="AAD44974.1"/>
    <property type="molecule type" value="mRNA"/>
</dbReference>
<dbReference type="EMBL" id="AF158821">
    <property type="protein sequence ID" value="AAD44973.1"/>
    <property type="molecule type" value="mRNA"/>
</dbReference>
<dbReference type="PIR" id="A61455">
    <property type="entry name" value="A61455"/>
</dbReference>
<dbReference type="PIR" id="A61578">
    <property type="entry name" value="A61578"/>
</dbReference>
<dbReference type="RefSeq" id="NP_001095205.1">
    <property type="nucleotide sequence ID" value="NM_001101735.1"/>
</dbReference>
<dbReference type="SMR" id="Q29429"/>
<dbReference type="GlyCosmos" id="Q29429">
    <property type="glycosylation" value="1 site, No reported glycans"/>
</dbReference>
<dbReference type="Ensembl" id="ENSOART00215087881">
    <property type="protein sequence ID" value="ENSOARP00215048184"/>
    <property type="gene ID" value="ENSOARG00215051871"/>
</dbReference>
<dbReference type="Ensembl" id="ENSOART00225060937">
    <property type="protein sequence ID" value="ENSOARP00225030638"/>
    <property type="gene ID" value="ENSOARG00225036816"/>
</dbReference>
<dbReference type="GeneID" id="443403"/>
<dbReference type="KEGG" id="oas:443403"/>
<dbReference type="CTD" id="443403"/>
<dbReference type="OrthoDB" id="9833506at2759"/>
<dbReference type="Proteomes" id="UP000002356">
    <property type="component" value="Unplaced"/>
</dbReference>
<dbReference type="GO" id="GO:0005615">
    <property type="term" value="C:extracellular space"/>
    <property type="evidence" value="ECO:0007669"/>
    <property type="project" value="UniProtKB-KW"/>
</dbReference>
<dbReference type="GO" id="GO:0005125">
    <property type="term" value="F:cytokine activity"/>
    <property type="evidence" value="ECO:0007669"/>
    <property type="project" value="UniProtKB-KW"/>
</dbReference>
<dbReference type="GO" id="GO:0005126">
    <property type="term" value="F:cytokine receptor binding"/>
    <property type="evidence" value="ECO:0007669"/>
    <property type="project" value="InterPro"/>
</dbReference>
<dbReference type="GO" id="GO:0005179">
    <property type="term" value="F:hormone activity"/>
    <property type="evidence" value="ECO:0007669"/>
    <property type="project" value="UniProtKB-KW"/>
</dbReference>
<dbReference type="GO" id="GO:0051607">
    <property type="term" value="P:defense response to virus"/>
    <property type="evidence" value="ECO:0007669"/>
    <property type="project" value="UniProtKB-KW"/>
</dbReference>
<dbReference type="GO" id="GO:0007565">
    <property type="term" value="P:female pregnancy"/>
    <property type="evidence" value="ECO:0007669"/>
    <property type="project" value="UniProtKB-KW"/>
</dbReference>
<dbReference type="CDD" id="cd00095">
    <property type="entry name" value="IFab"/>
    <property type="match status" value="1"/>
</dbReference>
<dbReference type="FunFam" id="1.20.1250.10:FF:000001">
    <property type="entry name" value="Interferon alpha"/>
    <property type="match status" value="1"/>
</dbReference>
<dbReference type="Gene3D" id="1.20.1250.10">
    <property type="match status" value="1"/>
</dbReference>
<dbReference type="InterPro" id="IPR009079">
    <property type="entry name" value="4_helix_cytokine-like_core"/>
</dbReference>
<dbReference type="InterPro" id="IPR000471">
    <property type="entry name" value="Interferon_alpha/beta/delta"/>
</dbReference>
<dbReference type="PANTHER" id="PTHR11691:SF37">
    <property type="entry name" value="INTERFERON OMEGA-1"/>
    <property type="match status" value="1"/>
</dbReference>
<dbReference type="PANTHER" id="PTHR11691">
    <property type="entry name" value="TYPE I INTERFERON"/>
    <property type="match status" value="1"/>
</dbReference>
<dbReference type="Pfam" id="PF00143">
    <property type="entry name" value="Interferon"/>
    <property type="match status" value="1"/>
</dbReference>
<dbReference type="PRINTS" id="PR00266">
    <property type="entry name" value="INTERFERONAB"/>
</dbReference>
<dbReference type="SMART" id="SM00076">
    <property type="entry name" value="IFabd"/>
    <property type="match status" value="1"/>
</dbReference>
<dbReference type="SUPFAM" id="SSF47266">
    <property type="entry name" value="4-helical cytokines"/>
    <property type="match status" value="1"/>
</dbReference>
<dbReference type="PROSITE" id="PS00252">
    <property type="entry name" value="INTERFERON_A_B_D"/>
    <property type="match status" value="1"/>
</dbReference>
<reference key="1">
    <citation type="journal article" date="1990" name="Nucleic Acids Res.">
        <title>Sequence variability among ovine trophoblast interferon cDNA.</title>
        <authorList>
            <person name="Klemann S.W."/>
            <person name="Imakawa K."/>
            <person name="Roberts R.M."/>
        </authorList>
    </citation>
    <scope>NUCLEOTIDE SEQUENCE [MRNA] (IFN-TAU6D)</scope>
    <source>
        <tissue>Embryo</tissue>
    </source>
</reference>
<reference key="2">
    <citation type="submission" date="1996-01" db="EMBL/GenBank/DDBJ databases">
        <authorList>
            <person name="Roberts R.M."/>
        </authorList>
    </citation>
    <scope>NUCLEOTIDE SEQUENCE [MRNA] (IFN-TAU6D)</scope>
</reference>
<reference key="3">
    <citation type="submission" date="1999-06" db="EMBL/GenBank/DDBJ databases">
        <title>Identification of the expressed forms of ovine interferon-tau in the peri-implantation conceptus: sequence relationships and comparative biological activities.</title>
        <authorList>
            <person name="Winkelman G.L."/>
            <person name="Roberts R.M."/>
            <person name="Peterson A.J."/>
            <person name="Alexenko A.P."/>
            <person name="Ealy A.D."/>
        </authorList>
    </citation>
    <scope>NUCLEOTIDE SEQUENCE [MRNA] OF 24-195 (IFN-TAU6A; IFN-TAU6B AND IFN-TAU6C)</scope>
    <scope>VARIANTS GLU-130; ASN-136 AND MET-188</scope>
    <source>
        <tissue>Embryo</tissue>
    </source>
</reference>
<reference key="4">
    <citation type="journal article" date="1996" name="Endocrinology">
        <title>Ovine interferon tau suppresses transcription of the estrogen receptor and oxytocin receptor genes in the ovine endometrium.</title>
        <authorList>
            <person name="Spencer T.E."/>
            <person name="Bazer F.W."/>
        </authorList>
    </citation>
    <scope>FUNCTION</scope>
</reference>
<reference key="5">
    <citation type="journal article" date="1994" name="Protein Eng.">
        <title>Predicted structural motif of IFN tau.</title>
        <authorList>
            <person name="Jarpe M.A."/>
            <person name="Johnson H.M."/>
            <person name="Bazer F.W."/>
            <person name="Ott T.L."/>
            <person name="Curto E.V."/>
            <person name="Krishna N.R."/>
            <person name="Pontzer C.H."/>
        </authorList>
    </citation>
    <scope>CIRCULAR DICHROISM ANALYSIS</scope>
    <scope>3D-STRUCTURE MODELING</scope>
</reference>
<reference key="6">
    <citation type="journal article" date="1995" name="J. Interferon Cytokine Res.">
        <title>A three-dimensional model of interferon-tau.</title>
        <authorList>
            <person name="Senda T."/>
            <person name="Saitoh S."/>
            <person name="Mitsui Y."/>
            <person name="Li J."/>
            <person name="Roberts R.M."/>
        </authorList>
    </citation>
    <scope>3D-STRUCTURE MODELING</scope>
</reference>
<reference key="7">
    <citation type="journal article" date="1998" name="Biochimie">
        <title>IFN-tau: a novel subtype I IFN1. Structural characteristics, non-ubiquitous expression, structure-function relationships, a pregnancy hormonal embryonic signal and cross-species therapeutic potentialities.</title>
        <authorList>
            <person name="Martal J.L."/>
            <person name="Chene N.M."/>
            <person name="Huynh L.P."/>
            <person name="L'Haridon R.M."/>
            <person name="Reinaud P.B."/>
            <person name="Guillomot M.W."/>
            <person name="Charlier M.A."/>
            <person name="Charpigny S.Y."/>
        </authorList>
    </citation>
    <scope>REVIEW</scope>
</reference>
<keyword id="KW-0051">Antiviral defense</keyword>
<keyword id="KW-0202">Cytokine</keyword>
<keyword id="KW-1015">Disulfide bond</keyword>
<keyword id="KW-0325">Glycoprotein</keyword>
<keyword id="KW-0372">Hormone</keyword>
<keyword id="KW-0635">Pregnancy</keyword>
<keyword id="KW-1185">Reference proteome</keyword>
<keyword id="KW-0964">Secreted</keyword>
<keyword id="KW-0732">Signal</keyword>
<sequence>MAFVLSLLMALVLVSYGPGGSLGCYLSRKLMLDARENLRLLDRMNRLSPHSCLQDRKDFGLPQEMVEGDQLQKDQAFSVLYEMLQQSFNVFHTERSSAAWNTTLLEQLCTGLQQQLDHLDTCRGPVMGEKDSELGKMDPIVTVKKYFQGIHDYLQEKGYSDCAWEIVRVEMMRALTSSTTLQKRLTKTGGDLNSP</sequence>
<evidence type="ECO:0000250" key="1"/>
<evidence type="ECO:0000255" key="2"/>
<evidence type="ECO:0000269" key="3">
    <source>
    </source>
</evidence>
<evidence type="ECO:0000269" key="4">
    <source>
    </source>
</evidence>
<evidence type="ECO:0000269" key="5">
    <source ref="2"/>
</evidence>
<evidence type="ECO:0000269" key="6">
    <source ref="3"/>
</evidence>
<evidence type="ECO:0000305" key="7"/>
<proteinExistence type="evidence at transcript level"/>
<accession>Q29429</accession>
<gene>
    <name type="primary">IFNT6</name>
</gene>
<feature type="signal peptide" evidence="1">
    <location>
        <begin position="1"/>
        <end position="23"/>
    </location>
</feature>
<feature type="chain" id="PRO_0000016417" description="Interferon tau-6">
    <location>
        <begin position="24"/>
        <end position="195"/>
    </location>
</feature>
<feature type="glycosylation site" description="N-linked (GlcNAc...) asparagine" evidence="2">
    <location>
        <position position="101"/>
    </location>
</feature>
<feature type="disulfide bond" evidence="1">
    <location>
        <begin position="24"/>
        <end position="122"/>
    </location>
</feature>
<feature type="disulfide bond" evidence="1">
    <location>
        <begin position="52"/>
        <end position="162"/>
    </location>
</feature>
<feature type="sequence variant" description="In IFN-tau6A and IFN-tau6B." evidence="6">
    <original>K</original>
    <variation>E</variation>
    <location>
        <position position="130"/>
    </location>
</feature>
<feature type="sequence variant" description="In IFN-tau6A, IFN-tau6B and IFN-tau6C." evidence="6">
    <original>K</original>
    <variation>N</variation>
    <location>
        <position position="136"/>
    </location>
</feature>
<feature type="sequence variant" description="In IFN-tau6A." evidence="6">
    <original>T</original>
    <variation>M</variation>
    <location>
        <position position="188"/>
    </location>
</feature>
<organism>
    <name type="scientific">Ovis aries</name>
    <name type="common">Sheep</name>
    <dbReference type="NCBI Taxonomy" id="9940"/>
    <lineage>
        <taxon>Eukaryota</taxon>
        <taxon>Metazoa</taxon>
        <taxon>Chordata</taxon>
        <taxon>Craniata</taxon>
        <taxon>Vertebrata</taxon>
        <taxon>Euteleostomi</taxon>
        <taxon>Mammalia</taxon>
        <taxon>Eutheria</taxon>
        <taxon>Laurasiatheria</taxon>
        <taxon>Artiodactyla</taxon>
        <taxon>Ruminantia</taxon>
        <taxon>Pecora</taxon>
        <taxon>Bovidae</taxon>
        <taxon>Caprinae</taxon>
        <taxon>Ovis</taxon>
    </lineage>
</organism>
<comment type="function">
    <text evidence="4">Paracrine hormone primarily responsible for maternal recognition of pregnancy. Interacts with endometrial receptors, probably type I interferon receptors, and blocks estrogen receptor expression, preventing the estrogen-induced increase in oxytocin receptor expression in the endometrium. This results in the suppression of the pulsatile endometrial release of the luteolytic hormone prostaglandin F2-alpha, hindering the regression of the corpus luteum (luteolysis) and therefore a return to ovarian cyclicity. This, and a possible direct effect of IFN-tau on prostaglandin synthesis, leads in turn to continued ovarian progesterone secretion, which stimulates the secretion by the endometrium of the nutrients required for the growth of the conceptus. In summary, displays particularly high antiviral and antiproliferative potency concurrently with particular weak cytotoxicity, high antiluteolytic activity and immunomodulatory properties. In contrast with other IFNs, IFN-tau is not virally inducible.</text>
</comment>
<comment type="subcellular location">
    <subcellularLocation>
        <location>Secreted</location>
    </subcellularLocation>
    <text>Secreted into the uterine lumen.</text>
</comment>
<comment type="tissue specificity">
    <text>Constitutively and exclusively expressed in the mononuclear cells of the extraembryonic trophectoderm.</text>
</comment>
<comment type="developmental stage">
    <text>Major secretory product synthesized by the sheep conceptus between days 13 and 21 of pregnancy.</text>
</comment>
<comment type="polymorphism">
    <text evidence="3 5 6">There seems to be four variants of IFN-tau 6: A/p6V3, B/p6V2, C/p6V1 and D/P6/p12 (shown here).</text>
</comment>
<comment type="miscellaneous">
    <text>IFN-tau genes are intronless. They evolved from IFN-omega genes in the ruminantia suborder and have continued to duplicate independently in different lineages of the ruminantia. They code for proteins very similar in sequence but with different biological potency and pattern of expression.</text>
</comment>
<comment type="similarity">
    <text evidence="7">Belongs to the alpha/beta interferon family. IFN-alphaII subfamily.</text>
</comment>
<protein>
    <recommendedName>
        <fullName>Interferon tau-6</fullName>
        <shortName>IFN-tau-6</shortName>
    </recommendedName>
    <alternativeName>
        <fullName>Antiluteolysin</fullName>
    </alternativeName>
    <alternativeName>
        <fullName>Trophoblast antiluteolytic protein</fullName>
    </alternativeName>
    <alternativeName>
        <fullName>Trophoblast protein 1</fullName>
        <shortName>TP-1</shortName>
    </alternativeName>
    <alternativeName>
        <fullName>Trophoblastin</fullName>
    </alternativeName>
</protein>